<gene>
    <name evidence="7" type="primary">TRAPPC1</name>
    <name type="synonym">BET5</name>
    <name evidence="5" type="synonym">MUM2</name>
</gene>
<keyword id="KW-0256">Endoplasmic reticulum</keyword>
<keyword id="KW-0931">ER-Golgi transport</keyword>
<keyword id="KW-0333">Golgi apparatus</keyword>
<keyword id="KW-1267">Proteomics identification</keyword>
<keyword id="KW-1185">Reference proteome</keyword>
<keyword id="KW-0813">Transport</keyword>
<name>TPPC1_HUMAN</name>
<proteinExistence type="evidence at protein level"/>
<reference key="1">
    <citation type="journal article" date="1999" name="Cancer Res.">
        <title>Two antigens recognized by autologous cytolytic T lymphocytes on a melanoma result from a single point mutation in an essential housekeeping gene.</title>
        <authorList>
            <person name="Chiari R."/>
            <person name="Foury F."/>
            <person name="De Plaen E."/>
            <person name="Baurain J.-F."/>
            <person name="Thonnard J."/>
            <person name="Coulie P.G."/>
        </authorList>
    </citation>
    <scope>NUCLEOTIDE SEQUENCE [GENOMIC DNA]</scope>
    <scope>VARIANT MELANOMA GLY-129</scope>
</reference>
<reference key="2">
    <citation type="submission" date="2005-09" db="EMBL/GenBank/DDBJ databases">
        <authorList>
            <person name="Mural R.J."/>
            <person name="Istrail S."/>
            <person name="Sutton G.G."/>
            <person name="Florea L."/>
            <person name="Halpern A.L."/>
            <person name="Mobarry C.M."/>
            <person name="Lippert R."/>
            <person name="Walenz B."/>
            <person name="Shatkay H."/>
            <person name="Dew I."/>
            <person name="Miller J.R."/>
            <person name="Flanigan M.J."/>
            <person name="Edwards N.J."/>
            <person name="Bolanos R."/>
            <person name="Fasulo D."/>
            <person name="Halldorsson B.V."/>
            <person name="Hannenhalli S."/>
            <person name="Turner R."/>
            <person name="Yooseph S."/>
            <person name="Lu F."/>
            <person name="Nusskern D.R."/>
            <person name="Shue B.C."/>
            <person name="Zheng X.H."/>
            <person name="Zhong F."/>
            <person name="Delcher A.L."/>
            <person name="Huson D.H."/>
            <person name="Kravitz S.A."/>
            <person name="Mouchard L."/>
            <person name="Reinert K."/>
            <person name="Remington K.A."/>
            <person name="Clark A.G."/>
            <person name="Waterman M.S."/>
            <person name="Eichler E.E."/>
            <person name="Adams M.D."/>
            <person name="Hunkapiller M.W."/>
            <person name="Myers E.W."/>
            <person name="Venter J.C."/>
        </authorList>
    </citation>
    <scope>NUCLEOTIDE SEQUENCE [LARGE SCALE GENOMIC DNA]</scope>
</reference>
<reference key="3">
    <citation type="journal article" date="2004" name="Genome Res.">
        <title>The status, quality, and expansion of the NIH full-length cDNA project: the Mammalian Gene Collection (MGC).</title>
        <authorList>
            <consortium name="The MGC Project Team"/>
        </authorList>
    </citation>
    <scope>NUCLEOTIDE SEQUENCE [LARGE SCALE MRNA]</scope>
    <source>
        <tissue>Uterus</tissue>
    </source>
</reference>
<reference key="4">
    <citation type="journal article" date="2002" name="Nature">
        <title>Functional organization of the yeast proteome by systematic analysis of protein complexes.</title>
        <authorList>
            <person name="Gavin A.-C."/>
            <person name="Boesche M."/>
            <person name="Krause R."/>
            <person name="Grandi P."/>
            <person name="Marzioch M."/>
            <person name="Bauer A."/>
            <person name="Schultz J."/>
            <person name="Rick J.M."/>
            <person name="Michon A.-M."/>
            <person name="Cruciat C.-M."/>
            <person name="Remor M."/>
            <person name="Hoefert C."/>
            <person name="Schelder M."/>
            <person name="Brajenovic M."/>
            <person name="Ruffner H."/>
            <person name="Merino A."/>
            <person name="Klein K."/>
            <person name="Hudak M."/>
            <person name="Dickson D."/>
            <person name="Rudi T."/>
            <person name="Gnau V."/>
            <person name="Bauch A."/>
            <person name="Bastuck S."/>
            <person name="Huhse B."/>
            <person name="Leutwein C."/>
            <person name="Heurtier M.-A."/>
            <person name="Copley R.R."/>
            <person name="Edelmann A."/>
            <person name="Querfurth E."/>
            <person name="Rybin V."/>
            <person name="Drewes G."/>
            <person name="Raida M."/>
            <person name="Bouwmeester T."/>
            <person name="Bork P."/>
            <person name="Seraphin B."/>
            <person name="Kuster B."/>
            <person name="Neubauer G."/>
            <person name="Superti-Furga G."/>
        </authorList>
    </citation>
    <scope>IDENTIFICATION IN TRAPP COMPLEX</scope>
</reference>
<reference key="5">
    <citation type="journal article" date="2011" name="BMC Syst. Biol.">
        <title>Initial characterization of the human central proteome.</title>
        <authorList>
            <person name="Burkard T.R."/>
            <person name="Planyavsky M."/>
            <person name="Kaupe I."/>
            <person name="Breitwieser F.P."/>
            <person name="Buerckstuemmer T."/>
            <person name="Bennett K.L."/>
            <person name="Superti-Furga G."/>
            <person name="Colinge J."/>
        </authorList>
    </citation>
    <scope>IDENTIFICATION BY MASS SPECTROMETRY [LARGE SCALE ANALYSIS]</scope>
</reference>
<reference key="6">
    <citation type="journal article" date="2006" name="J. Mol. Biol.">
        <title>Structure of the Bet3-Tpc6B core of TRAPP: two Tpc6 paralogs form trimeric complexes with Bet3 and Mum2.</title>
        <authorList>
            <person name="Kummel D."/>
            <person name="Muller J.J."/>
            <person name="Roske Y."/>
            <person name="Henke N."/>
            <person name="Heinemann U."/>
        </authorList>
    </citation>
    <scope>SUBUNIT</scope>
    <scope>INTERACTION WITH TRAPPC6B AND TRAPPC3</scope>
</reference>
<evidence type="ECO:0000250" key="1"/>
<evidence type="ECO:0000269" key="2">
    <source>
    </source>
</evidence>
<evidence type="ECO:0000269" key="3">
    <source>
    </source>
</evidence>
<evidence type="ECO:0000269" key="4">
    <source>
    </source>
</evidence>
<evidence type="ECO:0000303" key="5">
    <source>
    </source>
</evidence>
<evidence type="ECO:0000305" key="6"/>
<evidence type="ECO:0000312" key="7">
    <source>
        <dbReference type="HGNC" id="HGNC:19894"/>
    </source>
</evidence>
<protein>
    <recommendedName>
        <fullName>Trafficking protein particle complex subunit 1</fullName>
    </recommendedName>
    <alternativeName>
        <fullName>BET5 homolog</fullName>
    </alternativeName>
    <alternativeName>
        <fullName>Multiple myeloma protein 2</fullName>
        <shortName>MUM-2</shortName>
    </alternativeName>
</protein>
<feature type="chain" id="PRO_0000211562" description="Trafficking protein particle complex subunit 1">
    <location>
        <begin position="1"/>
        <end position="145"/>
    </location>
</feature>
<feature type="sequence variant" id="VAR_013028" description="In a melanoma; dbSNP:rs200476704." evidence="2">
    <original>R</original>
    <variation>G</variation>
    <location>
        <position position="129"/>
    </location>
</feature>
<comment type="function">
    <text>May play a role in vesicular transport from endoplasmic reticulum to Golgi.</text>
</comment>
<comment type="subunit">
    <text evidence="3 4">Part of the multisubunit transport protein particle (TRAPP) complex (PubMed:11805826). The heterodimer TRAPPC6B-TRAPPC3 interacts with TRAPPC1 likely providing a core for TRAPP complex formation (PubMed:16828797).</text>
</comment>
<comment type="interaction">
    <interactant intactId="EBI-6160554">
        <id>Q9Y5R8</id>
    </interactant>
    <interactant intactId="EBI-743566">
        <id>O43617</id>
        <label>TRAPPC3</label>
    </interactant>
    <organismsDiffer>false</organismsDiffer>
    <experiments>9</experiments>
</comment>
<comment type="subcellular location">
    <subcellularLocation>
        <location evidence="1">Golgi apparatus</location>
        <location evidence="1">cis-Golgi network</location>
    </subcellularLocation>
    <subcellularLocation>
        <location evidence="1">Endoplasmic reticulum</location>
    </subcellularLocation>
</comment>
<comment type="similarity">
    <text evidence="6">Belongs to the TRAPP small subunits family. BET5 subfamily.</text>
</comment>
<dbReference type="EMBL" id="AF129332">
    <property type="protein sequence ID" value="AAD44697.1"/>
    <property type="molecule type" value="Genomic_DNA"/>
</dbReference>
<dbReference type="EMBL" id="CH471108">
    <property type="protein sequence ID" value="EAW90109.1"/>
    <property type="molecule type" value="Genomic_DNA"/>
</dbReference>
<dbReference type="EMBL" id="CH471108">
    <property type="protein sequence ID" value="EAW90110.1"/>
    <property type="molecule type" value="Genomic_DNA"/>
</dbReference>
<dbReference type="EMBL" id="CH471108">
    <property type="protein sequence ID" value="EAW90111.1"/>
    <property type="molecule type" value="Genomic_DNA"/>
</dbReference>
<dbReference type="EMBL" id="BC032717">
    <property type="protein sequence ID" value="AAH32717.1"/>
    <property type="molecule type" value="mRNA"/>
</dbReference>
<dbReference type="CCDS" id="CCDS11125.1"/>
<dbReference type="RefSeq" id="NP_001160093.1">
    <property type="nucleotide sequence ID" value="NM_001166621.1"/>
</dbReference>
<dbReference type="RefSeq" id="NP_067033.1">
    <property type="nucleotide sequence ID" value="NM_021210.5"/>
</dbReference>
<dbReference type="SMR" id="Q9Y5R8"/>
<dbReference type="BioGRID" id="121815">
    <property type="interactions" value="62"/>
</dbReference>
<dbReference type="ComplexPortal" id="CPX-4749">
    <property type="entry name" value="TRAPP II complex, TRAPPC2 variant"/>
</dbReference>
<dbReference type="ComplexPortal" id="CPX-4750">
    <property type="entry name" value="TRAPP III complex, TRAPPC2 variant"/>
</dbReference>
<dbReference type="ComplexPortal" id="CPX-6902">
    <property type="entry name" value="TRAPP II complex, TRAPPC2B variant"/>
</dbReference>
<dbReference type="ComplexPortal" id="CPX-6903">
    <property type="entry name" value="TRAPP III complex, TRAPPC2B variant"/>
</dbReference>
<dbReference type="CORUM" id="Q9Y5R8"/>
<dbReference type="DIP" id="DIP-48285N"/>
<dbReference type="FunCoup" id="Q9Y5R8">
    <property type="interactions" value="1606"/>
</dbReference>
<dbReference type="IntAct" id="Q9Y5R8">
    <property type="interactions" value="46"/>
</dbReference>
<dbReference type="STRING" id="9606.ENSP00000302783"/>
<dbReference type="DrugBank" id="DB08342">
    <property type="generic name" value="S-palmitoyl-L-cysteine"/>
</dbReference>
<dbReference type="GlyGen" id="Q9Y5R8">
    <property type="glycosylation" value="1 site"/>
</dbReference>
<dbReference type="iPTMnet" id="Q9Y5R8"/>
<dbReference type="PhosphoSitePlus" id="Q9Y5R8"/>
<dbReference type="BioMuta" id="TRAPPC1"/>
<dbReference type="jPOST" id="Q9Y5R8"/>
<dbReference type="MassIVE" id="Q9Y5R8"/>
<dbReference type="PaxDb" id="9606-ENSP00000302783"/>
<dbReference type="PeptideAtlas" id="Q9Y5R8"/>
<dbReference type="ProteomicsDB" id="86488"/>
<dbReference type="Pumba" id="Q9Y5R8"/>
<dbReference type="Antibodypedia" id="24467">
    <property type="antibodies" value="72 antibodies from 22 providers"/>
</dbReference>
<dbReference type="DNASU" id="58485"/>
<dbReference type="Ensembl" id="ENST00000303731.9">
    <property type="protein sequence ID" value="ENSP00000302783.4"/>
    <property type="gene ID" value="ENSG00000170043.12"/>
</dbReference>
<dbReference type="Ensembl" id="ENST00000540486.5">
    <property type="protein sequence ID" value="ENSP00000441130.1"/>
    <property type="gene ID" value="ENSG00000170043.12"/>
</dbReference>
<dbReference type="GeneID" id="58485"/>
<dbReference type="KEGG" id="hsa:58485"/>
<dbReference type="MANE-Select" id="ENST00000303731.9">
    <property type="protein sequence ID" value="ENSP00000302783.4"/>
    <property type="RefSeq nucleotide sequence ID" value="NM_021210.5"/>
    <property type="RefSeq protein sequence ID" value="NP_067033.1"/>
</dbReference>
<dbReference type="UCSC" id="uc002gjo.3">
    <property type="organism name" value="human"/>
</dbReference>
<dbReference type="AGR" id="HGNC:19894"/>
<dbReference type="CTD" id="58485"/>
<dbReference type="GeneCards" id="TRAPPC1"/>
<dbReference type="HGNC" id="HGNC:19894">
    <property type="gene designation" value="TRAPPC1"/>
</dbReference>
<dbReference type="HPA" id="ENSG00000170043">
    <property type="expression patterns" value="Low tissue specificity"/>
</dbReference>
<dbReference type="MIM" id="610969">
    <property type="type" value="gene"/>
</dbReference>
<dbReference type="neXtProt" id="NX_Q9Y5R8"/>
<dbReference type="OpenTargets" id="ENSG00000170043"/>
<dbReference type="PharmGKB" id="PA134988492"/>
<dbReference type="VEuPathDB" id="HostDB:ENSG00000170043"/>
<dbReference type="eggNOG" id="KOG3368">
    <property type="taxonomic scope" value="Eukaryota"/>
</dbReference>
<dbReference type="GeneTree" id="ENSGT00940000153761"/>
<dbReference type="HOGENOM" id="CLU_053380_4_1_1"/>
<dbReference type="InParanoid" id="Q9Y5R8"/>
<dbReference type="OMA" id="GKLMYGM"/>
<dbReference type="OrthoDB" id="246406at2759"/>
<dbReference type="PAN-GO" id="Q9Y5R8">
    <property type="GO annotations" value="2 GO annotations based on evolutionary models"/>
</dbReference>
<dbReference type="PhylomeDB" id="Q9Y5R8"/>
<dbReference type="TreeFam" id="TF323681"/>
<dbReference type="PathwayCommons" id="Q9Y5R8"/>
<dbReference type="Reactome" id="R-HSA-204005">
    <property type="pathway name" value="COPII-mediated vesicle transport"/>
</dbReference>
<dbReference type="Reactome" id="R-HSA-6798695">
    <property type="pathway name" value="Neutrophil degranulation"/>
</dbReference>
<dbReference type="Reactome" id="R-HSA-8876198">
    <property type="pathway name" value="RAB GEFs exchange GTP for GDP on RABs"/>
</dbReference>
<dbReference type="SignaLink" id="Q9Y5R8"/>
<dbReference type="BioGRID-ORCS" id="58485">
    <property type="hits" value="787 hits in 1184 CRISPR screens"/>
</dbReference>
<dbReference type="ChiTaRS" id="TRAPPC1">
    <property type="organism name" value="human"/>
</dbReference>
<dbReference type="GenomeRNAi" id="58485"/>
<dbReference type="Pharos" id="Q9Y5R8">
    <property type="development level" value="Tbio"/>
</dbReference>
<dbReference type="PRO" id="PR:Q9Y5R8"/>
<dbReference type="Proteomes" id="UP000005640">
    <property type="component" value="Chromosome 17"/>
</dbReference>
<dbReference type="RNAct" id="Q9Y5R8">
    <property type="molecule type" value="protein"/>
</dbReference>
<dbReference type="Bgee" id="ENSG00000170043">
    <property type="expression patterns" value="Expressed in monocyte and 174 other cell types or tissues"/>
</dbReference>
<dbReference type="ExpressionAtlas" id="Q9Y5R8">
    <property type="expression patterns" value="baseline and differential"/>
</dbReference>
<dbReference type="GO" id="GO:0035578">
    <property type="term" value="C:azurophil granule lumen"/>
    <property type="evidence" value="ECO:0000304"/>
    <property type="project" value="Reactome"/>
</dbReference>
<dbReference type="GO" id="GO:0005737">
    <property type="term" value="C:cytoplasm"/>
    <property type="evidence" value="ECO:0000303"/>
    <property type="project" value="ComplexPortal"/>
</dbReference>
<dbReference type="GO" id="GO:0005829">
    <property type="term" value="C:cytosol"/>
    <property type="evidence" value="ECO:0000304"/>
    <property type="project" value="Reactome"/>
</dbReference>
<dbReference type="GO" id="GO:0005783">
    <property type="term" value="C:endoplasmic reticulum"/>
    <property type="evidence" value="ECO:0007669"/>
    <property type="project" value="UniProtKB-SubCell"/>
</dbReference>
<dbReference type="GO" id="GO:0005576">
    <property type="term" value="C:extracellular region"/>
    <property type="evidence" value="ECO:0000304"/>
    <property type="project" value="Reactome"/>
</dbReference>
<dbReference type="GO" id="GO:0030008">
    <property type="term" value="C:TRAPP complex"/>
    <property type="evidence" value="ECO:0000318"/>
    <property type="project" value="GO_Central"/>
</dbReference>
<dbReference type="GO" id="GO:1990071">
    <property type="term" value="C:TRAPPII protein complex"/>
    <property type="evidence" value="ECO:0000303"/>
    <property type="project" value="ComplexPortal"/>
</dbReference>
<dbReference type="GO" id="GO:1990072">
    <property type="term" value="C:TRAPPIII protein complex"/>
    <property type="evidence" value="ECO:0000303"/>
    <property type="project" value="ComplexPortal"/>
</dbReference>
<dbReference type="GO" id="GO:0048208">
    <property type="term" value="P:COPII vesicle coating"/>
    <property type="evidence" value="ECO:0000303"/>
    <property type="project" value="ComplexPortal"/>
</dbReference>
<dbReference type="GO" id="GO:0006888">
    <property type="term" value="P:endoplasmic reticulum to Golgi vesicle-mediated transport"/>
    <property type="evidence" value="ECO:0000318"/>
    <property type="project" value="GO_Central"/>
</dbReference>
<dbReference type="GO" id="GO:0006901">
    <property type="term" value="P:vesicle coating"/>
    <property type="evidence" value="ECO:0000303"/>
    <property type="project" value="ComplexPortal"/>
</dbReference>
<dbReference type="GO" id="GO:0099022">
    <property type="term" value="P:vesicle tethering"/>
    <property type="evidence" value="ECO:0000303"/>
    <property type="project" value="ComplexPortal"/>
</dbReference>
<dbReference type="CDD" id="cd14855">
    <property type="entry name" value="TRAPPC1_MUM2"/>
    <property type="match status" value="1"/>
</dbReference>
<dbReference type="FunFam" id="3.30.450.70:FF:000004">
    <property type="entry name" value="Trafficking protein particle complex 1"/>
    <property type="match status" value="1"/>
</dbReference>
<dbReference type="Gene3D" id="3.30.450.70">
    <property type="match status" value="1"/>
</dbReference>
<dbReference type="InterPro" id="IPR011012">
    <property type="entry name" value="Longin-like_dom_sf"/>
</dbReference>
<dbReference type="InterPro" id="IPR007233">
    <property type="entry name" value="TRAPPC"/>
</dbReference>
<dbReference type="PANTHER" id="PTHR23249">
    <property type="entry name" value="TRAFFICKING PROTEIN PARTICLE COMPLEX SUBUNIT"/>
    <property type="match status" value="1"/>
</dbReference>
<dbReference type="PANTHER" id="PTHR23249:SF16">
    <property type="entry name" value="TRAFFICKING PROTEIN PARTICLE COMPLEX SUBUNIT 1"/>
    <property type="match status" value="1"/>
</dbReference>
<dbReference type="Pfam" id="PF04099">
    <property type="entry name" value="Sybindin"/>
    <property type="match status" value="1"/>
</dbReference>
<dbReference type="SMART" id="SM01399">
    <property type="entry name" value="Sybindin"/>
    <property type="match status" value="1"/>
</dbReference>
<dbReference type="SUPFAM" id="SSF64356">
    <property type="entry name" value="SNARE-like"/>
    <property type="match status" value="1"/>
</dbReference>
<organism>
    <name type="scientific">Homo sapiens</name>
    <name type="common">Human</name>
    <dbReference type="NCBI Taxonomy" id="9606"/>
    <lineage>
        <taxon>Eukaryota</taxon>
        <taxon>Metazoa</taxon>
        <taxon>Chordata</taxon>
        <taxon>Craniata</taxon>
        <taxon>Vertebrata</taxon>
        <taxon>Euteleostomi</taxon>
        <taxon>Mammalia</taxon>
        <taxon>Eutheria</taxon>
        <taxon>Euarchontoglires</taxon>
        <taxon>Primates</taxon>
        <taxon>Haplorrhini</taxon>
        <taxon>Catarrhini</taxon>
        <taxon>Hominidae</taxon>
        <taxon>Homo</taxon>
    </lineage>
</organism>
<accession>Q9Y5R8</accession>
<accession>D3DTR0</accession>
<sequence length="145" mass="16832">MTVHNLYLFDRNGVCLHYSEWHRKKQAGIPKEEEYKLMYGMLFSIRSFVSKMSPLDMKDGFLAFQTSRYKLHYYETPTGIKVVMNTDLGVGPIRDVLHHIYSALYVELVVKNPLCPLGQTVQSELFRSRLDSYVRSLPFFSARAG</sequence>